<keyword id="KW-0963">Cytoplasm</keyword>
<keyword id="KW-0238">DNA-binding</keyword>
<keyword id="KW-1185">Reference proteome</keyword>
<keyword id="KW-0804">Transcription</keyword>
<keyword id="KW-0805">Transcription regulation</keyword>
<name>Y2308_BORPE</name>
<feature type="chain" id="PRO_0000175773" description="Probable transcriptional regulatory protein BP2308">
    <location>
        <begin position="1"/>
        <end position="243"/>
    </location>
</feature>
<feature type="region of interest" description="Disordered" evidence="2">
    <location>
        <begin position="1"/>
        <end position="21"/>
    </location>
</feature>
<evidence type="ECO:0000255" key="1">
    <source>
        <dbReference type="HAMAP-Rule" id="MF_00693"/>
    </source>
</evidence>
<evidence type="ECO:0000256" key="2">
    <source>
        <dbReference type="SAM" id="MobiDB-lite"/>
    </source>
</evidence>
<comment type="subcellular location">
    <subcellularLocation>
        <location evidence="1">Cytoplasm</location>
    </subcellularLocation>
</comment>
<comment type="similarity">
    <text evidence="1">Belongs to the TACO1 family.</text>
</comment>
<gene>
    <name type="ordered locus">BP2308</name>
</gene>
<reference key="1">
    <citation type="journal article" date="2003" name="Nat. Genet.">
        <title>Comparative analysis of the genome sequences of Bordetella pertussis, Bordetella parapertussis and Bordetella bronchiseptica.</title>
        <authorList>
            <person name="Parkhill J."/>
            <person name="Sebaihia M."/>
            <person name="Preston A."/>
            <person name="Murphy L.D."/>
            <person name="Thomson N.R."/>
            <person name="Harris D.E."/>
            <person name="Holden M.T.G."/>
            <person name="Churcher C.M."/>
            <person name="Bentley S.D."/>
            <person name="Mungall K.L."/>
            <person name="Cerdeno-Tarraga A.-M."/>
            <person name="Temple L."/>
            <person name="James K.D."/>
            <person name="Harris B."/>
            <person name="Quail M.A."/>
            <person name="Achtman M."/>
            <person name="Atkin R."/>
            <person name="Baker S."/>
            <person name="Basham D."/>
            <person name="Bason N."/>
            <person name="Cherevach I."/>
            <person name="Chillingworth T."/>
            <person name="Collins M."/>
            <person name="Cronin A."/>
            <person name="Davis P."/>
            <person name="Doggett J."/>
            <person name="Feltwell T."/>
            <person name="Goble A."/>
            <person name="Hamlin N."/>
            <person name="Hauser H."/>
            <person name="Holroyd S."/>
            <person name="Jagels K."/>
            <person name="Leather S."/>
            <person name="Moule S."/>
            <person name="Norberczak H."/>
            <person name="O'Neil S."/>
            <person name="Ormond D."/>
            <person name="Price C."/>
            <person name="Rabbinowitsch E."/>
            <person name="Rutter S."/>
            <person name="Sanders M."/>
            <person name="Saunders D."/>
            <person name="Seeger K."/>
            <person name="Sharp S."/>
            <person name="Simmonds M."/>
            <person name="Skelton J."/>
            <person name="Squares R."/>
            <person name="Squares S."/>
            <person name="Stevens K."/>
            <person name="Unwin L."/>
            <person name="Whitehead S."/>
            <person name="Barrell B.G."/>
            <person name="Maskell D.J."/>
        </authorList>
    </citation>
    <scope>NUCLEOTIDE SEQUENCE [LARGE SCALE GENOMIC DNA]</scope>
    <source>
        <strain>Tohama I / ATCC BAA-589 / NCTC 13251</strain>
    </source>
</reference>
<sequence>MAGHSKWANIQHRKGRQDAKRGKLWTKIIREITVAARAGGADPDSNPRLRMAWDKATDANMPKDNIQRAIQRGAGGADGESYEEVRYEGYGIGGAAVIVDCMTDNRTRTVAEVRHAFAKHGGNLGQEGSVAFMFKHCGQFVFAPGTSEETVMEAALEAGAEDVATDEEGVIEVVCAPADFTAVRQAFEAAGLKAEVDGVVMKALNETELTGEDAVKMQKLLDVLESLDDVQEVYTNVVFDEAQ</sequence>
<proteinExistence type="inferred from homology"/>
<protein>
    <recommendedName>
        <fullName evidence="1">Probable transcriptional regulatory protein BP2308</fullName>
    </recommendedName>
</protein>
<accession>Q7VWE9</accession>
<dbReference type="EMBL" id="BX640418">
    <property type="protein sequence ID" value="CAE42581.1"/>
    <property type="molecule type" value="Genomic_DNA"/>
</dbReference>
<dbReference type="RefSeq" id="NP_880946.1">
    <property type="nucleotide sequence ID" value="NC_002929.2"/>
</dbReference>
<dbReference type="RefSeq" id="WP_010930861.1">
    <property type="nucleotide sequence ID" value="NZ_CP039022.1"/>
</dbReference>
<dbReference type="SMR" id="Q7VWE9"/>
<dbReference type="STRING" id="257313.BP2308"/>
<dbReference type="PaxDb" id="257313-BP2308"/>
<dbReference type="KEGG" id="bpe:BP2308"/>
<dbReference type="PATRIC" id="fig|257313.5.peg.2488"/>
<dbReference type="eggNOG" id="COG0217">
    <property type="taxonomic scope" value="Bacteria"/>
</dbReference>
<dbReference type="HOGENOM" id="CLU_062974_2_2_4"/>
<dbReference type="Proteomes" id="UP000002676">
    <property type="component" value="Chromosome"/>
</dbReference>
<dbReference type="GO" id="GO:0005829">
    <property type="term" value="C:cytosol"/>
    <property type="evidence" value="ECO:0007669"/>
    <property type="project" value="TreeGrafter"/>
</dbReference>
<dbReference type="GO" id="GO:0003677">
    <property type="term" value="F:DNA binding"/>
    <property type="evidence" value="ECO:0007669"/>
    <property type="project" value="UniProtKB-UniRule"/>
</dbReference>
<dbReference type="GO" id="GO:0006355">
    <property type="term" value="P:regulation of DNA-templated transcription"/>
    <property type="evidence" value="ECO:0007669"/>
    <property type="project" value="UniProtKB-UniRule"/>
</dbReference>
<dbReference type="FunFam" id="1.10.10.200:FF:000001">
    <property type="entry name" value="Probable transcriptional regulatory protein YebC"/>
    <property type="match status" value="1"/>
</dbReference>
<dbReference type="FunFam" id="3.30.70.980:FF:000002">
    <property type="entry name" value="Probable transcriptional regulatory protein YebC"/>
    <property type="match status" value="1"/>
</dbReference>
<dbReference type="Gene3D" id="1.10.10.200">
    <property type="match status" value="1"/>
</dbReference>
<dbReference type="Gene3D" id="3.30.70.980">
    <property type="match status" value="2"/>
</dbReference>
<dbReference type="HAMAP" id="MF_00693">
    <property type="entry name" value="Transcrip_reg_TACO1"/>
    <property type="match status" value="1"/>
</dbReference>
<dbReference type="InterPro" id="IPR017856">
    <property type="entry name" value="Integrase-like_N"/>
</dbReference>
<dbReference type="InterPro" id="IPR048300">
    <property type="entry name" value="TACO1_YebC-like_2nd/3rd_dom"/>
</dbReference>
<dbReference type="InterPro" id="IPR049083">
    <property type="entry name" value="TACO1_YebC_N"/>
</dbReference>
<dbReference type="InterPro" id="IPR002876">
    <property type="entry name" value="Transcrip_reg_TACO1-like"/>
</dbReference>
<dbReference type="InterPro" id="IPR026564">
    <property type="entry name" value="Transcrip_reg_TACO1-like_dom3"/>
</dbReference>
<dbReference type="InterPro" id="IPR029072">
    <property type="entry name" value="YebC-like"/>
</dbReference>
<dbReference type="NCBIfam" id="NF001030">
    <property type="entry name" value="PRK00110.1"/>
    <property type="match status" value="1"/>
</dbReference>
<dbReference type="NCBIfam" id="NF009044">
    <property type="entry name" value="PRK12378.1"/>
    <property type="match status" value="1"/>
</dbReference>
<dbReference type="NCBIfam" id="TIGR01033">
    <property type="entry name" value="YebC/PmpR family DNA-binding transcriptional regulator"/>
    <property type="match status" value="1"/>
</dbReference>
<dbReference type="PANTHER" id="PTHR12532:SF6">
    <property type="entry name" value="TRANSCRIPTIONAL REGULATORY PROTEIN YEBC-RELATED"/>
    <property type="match status" value="1"/>
</dbReference>
<dbReference type="PANTHER" id="PTHR12532">
    <property type="entry name" value="TRANSLATIONAL ACTIVATOR OF CYTOCHROME C OXIDASE 1"/>
    <property type="match status" value="1"/>
</dbReference>
<dbReference type="Pfam" id="PF20772">
    <property type="entry name" value="TACO1_YebC_N"/>
    <property type="match status" value="1"/>
</dbReference>
<dbReference type="Pfam" id="PF01709">
    <property type="entry name" value="Transcrip_reg"/>
    <property type="match status" value="1"/>
</dbReference>
<dbReference type="SUPFAM" id="SSF75625">
    <property type="entry name" value="YebC-like"/>
    <property type="match status" value="1"/>
</dbReference>
<organism>
    <name type="scientific">Bordetella pertussis (strain Tohama I / ATCC BAA-589 / NCTC 13251)</name>
    <dbReference type="NCBI Taxonomy" id="257313"/>
    <lineage>
        <taxon>Bacteria</taxon>
        <taxon>Pseudomonadati</taxon>
        <taxon>Pseudomonadota</taxon>
        <taxon>Betaproteobacteria</taxon>
        <taxon>Burkholderiales</taxon>
        <taxon>Alcaligenaceae</taxon>
        <taxon>Bordetella</taxon>
    </lineage>
</organism>